<accession>Q06J44</accession>
<evidence type="ECO:0000250" key="1"/>
<evidence type="ECO:0000255" key="2">
    <source>
        <dbReference type="HAMAP-Rule" id="MF_01344"/>
    </source>
</evidence>
<dbReference type="EMBL" id="DQ851108">
    <property type="protein sequence ID" value="ABG91410.1"/>
    <property type="molecule type" value="Genomic_DNA"/>
</dbReference>
<dbReference type="EMBL" id="DQ851108">
    <property type="protein sequence ID" value="ABG91415.1"/>
    <property type="molecule type" value="Genomic_DNA"/>
</dbReference>
<dbReference type="SMR" id="Q06J44"/>
<dbReference type="GO" id="GO:0009535">
    <property type="term" value="C:chloroplast thylakoid membrane"/>
    <property type="evidence" value="ECO:0007669"/>
    <property type="project" value="UniProtKB-SubCell"/>
</dbReference>
<dbReference type="GO" id="GO:0045158">
    <property type="term" value="F:electron transporter, transferring electrons within cytochrome b6/f complex of photosystem II activity"/>
    <property type="evidence" value="ECO:0007669"/>
    <property type="project" value="UniProtKB-UniRule"/>
</dbReference>
<dbReference type="GO" id="GO:0045156">
    <property type="term" value="F:electron transporter, transferring electrons within the cyclic electron transport pathway of photosynthesis activity"/>
    <property type="evidence" value="ECO:0007669"/>
    <property type="project" value="InterPro"/>
</dbReference>
<dbReference type="GO" id="GO:0016491">
    <property type="term" value="F:oxidoreductase activity"/>
    <property type="evidence" value="ECO:0007669"/>
    <property type="project" value="InterPro"/>
</dbReference>
<dbReference type="GO" id="GO:0009767">
    <property type="term" value="P:photosynthetic electron transport chain"/>
    <property type="evidence" value="ECO:0007669"/>
    <property type="project" value="InterPro"/>
</dbReference>
<dbReference type="CDD" id="cd00290">
    <property type="entry name" value="cytochrome_b_C"/>
    <property type="match status" value="1"/>
</dbReference>
<dbReference type="FunFam" id="1.10.287.980:FF:000001">
    <property type="entry name" value="Cytochrome b6-f complex subunit 4"/>
    <property type="match status" value="1"/>
</dbReference>
<dbReference type="Gene3D" id="1.10.287.980">
    <property type="entry name" value="plastocyanin oxidoreductase"/>
    <property type="match status" value="1"/>
</dbReference>
<dbReference type="Gene3D" id="1.20.5.510">
    <property type="entry name" value="Single helix bin"/>
    <property type="match status" value="1"/>
</dbReference>
<dbReference type="HAMAP" id="MF_01344">
    <property type="entry name" value="Cytb6_f_subIV"/>
    <property type="match status" value="1"/>
</dbReference>
<dbReference type="InterPro" id="IPR005798">
    <property type="entry name" value="Cyt_b/b6_C"/>
</dbReference>
<dbReference type="InterPro" id="IPR036150">
    <property type="entry name" value="Cyt_b/b6_C_sf"/>
</dbReference>
<dbReference type="InterPro" id="IPR005870">
    <property type="entry name" value="Cyt_b6/f_cplx_suIV"/>
</dbReference>
<dbReference type="InterPro" id="IPR048260">
    <property type="entry name" value="Cytochrome_b_C_euk/bac"/>
</dbReference>
<dbReference type="NCBIfam" id="TIGR01156">
    <property type="entry name" value="cytb6_f_IV"/>
    <property type="match status" value="1"/>
</dbReference>
<dbReference type="PANTHER" id="PTHR19271">
    <property type="entry name" value="CYTOCHROME B"/>
    <property type="match status" value="1"/>
</dbReference>
<dbReference type="PANTHER" id="PTHR19271:SF40">
    <property type="entry name" value="CYTOCHROME B"/>
    <property type="match status" value="1"/>
</dbReference>
<dbReference type="Pfam" id="PF00032">
    <property type="entry name" value="Cytochrom_B_C"/>
    <property type="match status" value="1"/>
</dbReference>
<dbReference type="PIRSF" id="PIRSF000033">
    <property type="entry name" value="B6f_17K"/>
    <property type="match status" value="1"/>
</dbReference>
<dbReference type="SUPFAM" id="SSF81648">
    <property type="entry name" value="a domain/subunit of cytochrome bc1 complex (Ubiquinol-cytochrome c reductase)"/>
    <property type="match status" value="1"/>
</dbReference>
<dbReference type="PROSITE" id="PS51003">
    <property type="entry name" value="CYTB_CTER"/>
    <property type="match status" value="1"/>
</dbReference>
<sequence>MSVVKEPTLADFYVRKKLYTGMGHNYYGEPAWPNDLLYMFPVVILGTLFCLVSLAVLETGSIGDASDPFKTPEEILPEWYFYPVFQILRTVPSKLIGILLMAGVPVGLATVPFIENINQFQNPFRRPIASAVFLFGTLVAIWLGIGATLPIDISLTLGLF</sequence>
<comment type="function">
    <text evidence="2">Component of the cytochrome b6-f complex, which mediates electron transfer between photosystem II (PSII) and photosystem I (PSI), cyclic electron flow around PSI, and state transitions.</text>
</comment>
<comment type="subunit">
    <text evidence="1">The 4 large subunits of the cytochrome b6-f complex are cytochrome b6, subunit IV (17 kDa polypeptide, petD), cytochrome f and the Rieske protein, while the 4 small subunits are petG, petL, petM and petN. The complex functions as a dimer (By similarity).</text>
</comment>
<comment type="subcellular location">
    <subcellularLocation>
        <location evidence="2">Plastid</location>
        <location evidence="2">Chloroplast thylakoid membrane</location>
        <topology evidence="2">Multi-pass membrane protein</topology>
    </subcellularLocation>
</comment>
<comment type="similarity">
    <text evidence="2">Belongs to the cytochrome b family. PetD subfamily.</text>
</comment>
<keyword id="KW-0150">Chloroplast</keyword>
<keyword id="KW-0249">Electron transport</keyword>
<keyword id="KW-0472">Membrane</keyword>
<keyword id="KW-0602">Photosynthesis</keyword>
<keyword id="KW-0934">Plastid</keyword>
<keyword id="KW-0793">Thylakoid</keyword>
<keyword id="KW-0812">Transmembrane</keyword>
<keyword id="KW-1133">Transmembrane helix</keyword>
<keyword id="KW-0813">Transport</keyword>
<name>PETD_BIGNA</name>
<proteinExistence type="inferred from homology"/>
<reference key="1">
    <citation type="journal article" date="2007" name="Mol. Biol. Evol.">
        <title>The complete chloroplast genome of the chlorarachniophyte Bigelowiella natans: evidence for independent origins of chlorarachniophyte and euglenid secondary endosymbionts.</title>
        <authorList>
            <person name="Rogers M.B."/>
            <person name="Gilson P.R."/>
            <person name="Su V."/>
            <person name="McFadden G.I."/>
            <person name="Keeling P.J."/>
        </authorList>
    </citation>
    <scope>NUCLEOTIDE SEQUENCE [LARGE SCALE GENOMIC DNA]</scope>
</reference>
<organism>
    <name type="scientific">Bigelowiella natans</name>
    <name type="common">Pedinomonas minutissima</name>
    <name type="synonym">Chlorarachnion sp. (strain CCMP621)</name>
    <dbReference type="NCBI Taxonomy" id="227086"/>
    <lineage>
        <taxon>Eukaryota</taxon>
        <taxon>Sar</taxon>
        <taxon>Rhizaria</taxon>
        <taxon>Cercozoa</taxon>
        <taxon>Chlorarachniophyceae</taxon>
        <taxon>Bigelowiella</taxon>
    </lineage>
</organism>
<geneLocation type="chloroplast"/>
<gene>
    <name evidence="2" type="primary">petD-A</name>
</gene>
<gene>
    <name evidence="2" type="primary">petD-B</name>
</gene>
<protein>
    <recommendedName>
        <fullName evidence="2">Cytochrome b6-f complex subunit 4</fullName>
    </recommendedName>
    <alternativeName>
        <fullName evidence="2">17 kDa polypeptide</fullName>
    </alternativeName>
</protein>
<feature type="chain" id="PRO_0000296335" description="Cytochrome b6-f complex subunit 4">
    <location>
        <begin position="1"/>
        <end position="160"/>
    </location>
</feature>
<feature type="transmembrane region" description="Helical" evidence="2">
    <location>
        <begin position="36"/>
        <end position="56"/>
    </location>
</feature>
<feature type="transmembrane region" description="Helical" evidence="2">
    <location>
        <begin position="95"/>
        <end position="115"/>
    </location>
</feature>
<feature type="transmembrane region" description="Helical" evidence="2">
    <location>
        <begin position="131"/>
        <end position="151"/>
    </location>
</feature>